<evidence type="ECO:0000250" key="1">
    <source>
        <dbReference type="UniProtKB" id="Q9D8N3"/>
    </source>
</evidence>
<evidence type="ECO:0000255" key="2"/>
<evidence type="ECO:0000269" key="3">
    <source>
    </source>
</evidence>
<evidence type="ECO:0000305" key="4"/>
<sequence length="240" mass="26398">MVSPVTVVKSEGPKLVPFFKATCVYFVLWLPSSSPSWVSTLIKCLPIFCLWLFLLAHGLGFLLAHPSATRIFVGLVFSAVGDAFLIWQDQGYFVHGLLMFAVTHMFYASAFGMQPLALRTGLVMAALSGLCYALLYPCLSGAFTYLVGVYVALIGFMGWRAMAGLRLAGADWRWTELAAGSGALFFIISDLTIALNKFCFPVPYSRALIMSTYYVAQMLVALSAVESREPVEHYRLTKAN</sequence>
<dbReference type="EC" id="3.3.2.2" evidence="3"/>
<dbReference type="EMBL" id="AK074600">
    <property type="protein sequence ID" value="BAC11084.1"/>
    <property type="molecule type" value="mRNA"/>
</dbReference>
<dbReference type="EMBL" id="BC017073">
    <property type="protein sequence ID" value="AAH17073.2"/>
    <property type="molecule type" value="mRNA"/>
</dbReference>
<dbReference type="EMBL" id="BC035692">
    <property type="protein sequence ID" value="AAH35692.1"/>
    <property type="molecule type" value="mRNA"/>
</dbReference>
<dbReference type="CCDS" id="CCDS7844.1"/>
<dbReference type="RefSeq" id="NP_699178.1">
    <property type="nucleotide sequence ID" value="NM_153347.3"/>
</dbReference>
<dbReference type="BioGRID" id="126831">
    <property type="interactions" value="50"/>
</dbReference>
<dbReference type="FunCoup" id="Q8N2M4">
    <property type="interactions" value="160"/>
</dbReference>
<dbReference type="IntAct" id="Q8N2M4">
    <property type="interactions" value="46"/>
</dbReference>
<dbReference type="MINT" id="Q8N2M4"/>
<dbReference type="STRING" id="9606.ENSP00000280734"/>
<dbReference type="BioMuta" id="TMEM86A"/>
<dbReference type="DMDM" id="74728715"/>
<dbReference type="jPOST" id="Q8N2M4"/>
<dbReference type="MassIVE" id="Q8N2M4"/>
<dbReference type="PaxDb" id="9606-ENSP00000280734"/>
<dbReference type="PeptideAtlas" id="Q8N2M4"/>
<dbReference type="ProteomicsDB" id="71716"/>
<dbReference type="Antibodypedia" id="71292">
    <property type="antibodies" value="16 antibodies from 8 providers"/>
</dbReference>
<dbReference type="DNASU" id="144110"/>
<dbReference type="Ensembl" id="ENST00000280734.3">
    <property type="protein sequence ID" value="ENSP00000280734.2"/>
    <property type="gene ID" value="ENSG00000151117.9"/>
</dbReference>
<dbReference type="GeneID" id="144110"/>
<dbReference type="KEGG" id="hsa:144110"/>
<dbReference type="MANE-Select" id="ENST00000280734.3">
    <property type="protein sequence ID" value="ENSP00000280734.2"/>
    <property type="RefSeq nucleotide sequence ID" value="NM_153347.3"/>
    <property type="RefSeq protein sequence ID" value="NP_699178.1"/>
</dbReference>
<dbReference type="UCSC" id="uc001moz.2">
    <property type="organism name" value="human"/>
</dbReference>
<dbReference type="AGR" id="HGNC:26890"/>
<dbReference type="CTD" id="144110"/>
<dbReference type="DisGeNET" id="144110"/>
<dbReference type="GeneCards" id="TMEM86A"/>
<dbReference type="HGNC" id="HGNC:26890">
    <property type="gene designation" value="TMEM86A"/>
</dbReference>
<dbReference type="HPA" id="ENSG00000151117">
    <property type="expression patterns" value="Tissue enhanced (skin)"/>
</dbReference>
<dbReference type="neXtProt" id="NX_Q8N2M4"/>
<dbReference type="OpenTargets" id="ENSG00000151117"/>
<dbReference type="PharmGKB" id="PA142670737"/>
<dbReference type="VEuPathDB" id="HostDB:ENSG00000151117"/>
<dbReference type="eggNOG" id="KOG4804">
    <property type="taxonomic scope" value="Eukaryota"/>
</dbReference>
<dbReference type="GeneTree" id="ENSGT00390000007101"/>
<dbReference type="HOGENOM" id="CLU_079086_1_1_1"/>
<dbReference type="InParanoid" id="Q8N2M4"/>
<dbReference type="OMA" id="LMFGITH"/>
<dbReference type="OrthoDB" id="2133758at2759"/>
<dbReference type="PAN-GO" id="Q8N2M4">
    <property type="GO annotations" value="2 GO annotations based on evolutionary models"/>
</dbReference>
<dbReference type="PhylomeDB" id="Q8N2M4"/>
<dbReference type="TreeFam" id="TF324663"/>
<dbReference type="PathwayCommons" id="Q8N2M4"/>
<dbReference type="SignaLink" id="Q8N2M4"/>
<dbReference type="BioGRID-ORCS" id="144110">
    <property type="hits" value="15 hits in 1152 CRISPR screens"/>
</dbReference>
<dbReference type="GenomeRNAi" id="144110"/>
<dbReference type="Pharos" id="Q8N2M4">
    <property type="development level" value="Tdark"/>
</dbReference>
<dbReference type="PRO" id="PR:Q8N2M4"/>
<dbReference type="Proteomes" id="UP000005640">
    <property type="component" value="Chromosome 11"/>
</dbReference>
<dbReference type="RNAct" id="Q8N2M4">
    <property type="molecule type" value="protein"/>
</dbReference>
<dbReference type="Bgee" id="ENSG00000151117">
    <property type="expression patterns" value="Expressed in adrenal tissue and 129 other cell types or tissues"/>
</dbReference>
<dbReference type="GO" id="GO:0005789">
    <property type="term" value="C:endoplasmic reticulum membrane"/>
    <property type="evidence" value="ECO:0000250"/>
    <property type="project" value="UniProtKB"/>
</dbReference>
<dbReference type="GO" id="GO:0016020">
    <property type="term" value="C:membrane"/>
    <property type="evidence" value="ECO:0000318"/>
    <property type="project" value="GO_Central"/>
</dbReference>
<dbReference type="GO" id="GO:0047408">
    <property type="term" value="F:alkenylglycerophosphocholine hydrolase activity"/>
    <property type="evidence" value="ECO:0000314"/>
    <property type="project" value="UniProtKB"/>
</dbReference>
<dbReference type="GO" id="GO:0016787">
    <property type="term" value="F:hydrolase activity"/>
    <property type="evidence" value="ECO:0000318"/>
    <property type="project" value="GO_Central"/>
</dbReference>
<dbReference type="GO" id="GO:0006629">
    <property type="term" value="P:lipid metabolic process"/>
    <property type="evidence" value="ECO:0007669"/>
    <property type="project" value="UniProtKB-KW"/>
</dbReference>
<dbReference type="InterPro" id="IPR012506">
    <property type="entry name" value="TMEM86B-like"/>
</dbReference>
<dbReference type="PANTHER" id="PTHR31885">
    <property type="entry name" value="GH04784P"/>
    <property type="match status" value="1"/>
</dbReference>
<dbReference type="PANTHER" id="PTHR31885:SF9">
    <property type="entry name" value="LYSOPLASMALOGENASE-LIKE PROTEIN TMEM86A"/>
    <property type="match status" value="1"/>
</dbReference>
<dbReference type="Pfam" id="PF07947">
    <property type="entry name" value="YhhN"/>
    <property type="match status" value="1"/>
</dbReference>
<feature type="chain" id="PRO_0000201838" description="Lysoplasmalogenase TMEM86A">
    <location>
        <begin position="1"/>
        <end position="240"/>
    </location>
</feature>
<feature type="topological domain" description="Cytoplasmic" evidence="4">
    <location>
        <begin position="1"/>
        <end position="21"/>
    </location>
</feature>
<feature type="transmembrane region" description="Helical" evidence="2">
    <location>
        <begin position="22"/>
        <end position="42"/>
    </location>
</feature>
<feature type="topological domain" description="Extracellular" evidence="4">
    <location>
        <position position="43"/>
    </location>
</feature>
<feature type="transmembrane region" description="Helical" evidence="2">
    <location>
        <begin position="44"/>
        <end position="64"/>
    </location>
</feature>
<feature type="topological domain" description="Cytoplasmic" evidence="4">
    <location>
        <begin position="65"/>
        <end position="70"/>
    </location>
</feature>
<feature type="transmembrane region" description="Helical" evidence="2">
    <location>
        <begin position="71"/>
        <end position="91"/>
    </location>
</feature>
<feature type="topological domain" description="Extracellular" evidence="4">
    <location>
        <position position="92"/>
    </location>
</feature>
<feature type="transmembrane region" description="Helical" evidence="2">
    <location>
        <begin position="93"/>
        <end position="113"/>
    </location>
</feature>
<feature type="topological domain" description="Cytoplasmic" evidence="4">
    <location>
        <begin position="114"/>
        <end position="115"/>
    </location>
</feature>
<feature type="transmembrane region" description="Helical" evidence="2">
    <location>
        <begin position="116"/>
        <end position="136"/>
    </location>
</feature>
<feature type="topological domain" description="Extracellular" evidence="4">
    <location>
        <begin position="137"/>
        <end position="138"/>
    </location>
</feature>
<feature type="transmembrane region" description="Helical" evidence="2">
    <location>
        <begin position="139"/>
        <end position="159"/>
    </location>
</feature>
<feature type="topological domain" description="Cytoplasmic" evidence="4">
    <location>
        <begin position="160"/>
        <end position="174"/>
    </location>
</feature>
<feature type="transmembrane region" description="Helical" evidence="2">
    <location>
        <begin position="175"/>
        <end position="195"/>
    </location>
</feature>
<feature type="topological domain" description="Extracellular" evidence="4">
    <location>
        <begin position="196"/>
        <end position="206"/>
    </location>
</feature>
<feature type="transmembrane region" description="Helical" evidence="2">
    <location>
        <begin position="207"/>
        <end position="227"/>
    </location>
</feature>
<feature type="topological domain" description="Cytoplasmic" evidence="4">
    <location>
        <begin position="228"/>
        <end position="240"/>
    </location>
</feature>
<feature type="sequence variant" id="VAR_034564" description="In dbSNP:rs7945285.">
    <original>V</original>
    <variation>A</variation>
    <location>
        <position position="215"/>
    </location>
</feature>
<accession>Q8N2M4</accession>
<accession>Q96AJ0</accession>
<gene>
    <name type="primary">TMEM86A</name>
</gene>
<comment type="function">
    <text evidence="3">Catalyzes the hydrolysis of the vinyl ether bond of choline or ethanolamine lysoplasmalogens, forming fatty aldehyde and glycerophosphocholine or glycerophosphoethanolamine, respectively and is specific for the sn-2-deacylated (lyso) form of plasmalogen (PubMed:36592658). Plays an important role in lysoplasmalogen metabolism in the adipocyte tissue and macrophages (PubMed:36592658).</text>
</comment>
<comment type="catalytic activity">
    <reaction evidence="3">
        <text>a 1-O-(1Z-alkenyl)-sn-glycero-3-phosphocholine + H2O = a 2,3-saturated aldehyde + sn-glycerol 3-phosphocholine</text>
        <dbReference type="Rhea" id="RHEA:22544"/>
        <dbReference type="ChEBI" id="CHEBI:15377"/>
        <dbReference type="ChEBI" id="CHEBI:16870"/>
        <dbReference type="ChEBI" id="CHEBI:73359"/>
        <dbReference type="ChEBI" id="CHEBI:77287"/>
        <dbReference type="EC" id="3.3.2.2"/>
    </reaction>
</comment>
<comment type="catalytic activity">
    <reaction evidence="3">
        <text>a 1-O-(1Z-alkenyl)-sn-glycero-3-phosphoethanolamine + H2O = a 2,3-saturated aldehyde + sn-glycero-3-phosphoethanolamine</text>
        <dbReference type="Rhea" id="RHEA:16905"/>
        <dbReference type="ChEBI" id="CHEBI:15377"/>
        <dbReference type="ChEBI" id="CHEBI:73359"/>
        <dbReference type="ChEBI" id="CHEBI:77288"/>
        <dbReference type="ChEBI" id="CHEBI:143890"/>
        <dbReference type="EC" id="3.3.2.2"/>
    </reaction>
</comment>
<comment type="interaction">
    <interactant intactId="EBI-12015604">
        <id>Q8N2M4</id>
    </interactant>
    <interactant intactId="EBI-12701138">
        <id>P41181</id>
        <label>AQP2</label>
    </interactant>
    <organismsDiffer>false</organismsDiffer>
    <experiments>3</experiments>
</comment>
<comment type="interaction">
    <interactant intactId="EBI-12015604">
        <id>Q8N2M4</id>
    </interactant>
    <interactant intactId="EBI-2808854">
        <id>Q92482</id>
        <label>AQP3</label>
    </interactant>
    <organismsDiffer>false</organismsDiffer>
    <experiments>3</experiments>
</comment>
<comment type="interaction">
    <interactant intactId="EBI-12015604">
        <id>Q8N2M4</id>
    </interactant>
    <interactant intactId="EBI-747430">
        <id>Q9BXK5</id>
        <label>BCL2L13</label>
    </interactant>
    <organismsDiffer>false</organismsDiffer>
    <experiments>3</experiments>
</comment>
<comment type="interaction">
    <interactant intactId="EBI-12015604">
        <id>Q8N2M4</id>
    </interactant>
    <interactant intactId="EBI-7797864">
        <id>P11912</id>
        <label>CD79A</label>
    </interactant>
    <organismsDiffer>false</organismsDiffer>
    <experiments>3</experiments>
</comment>
<comment type="interaction">
    <interactant intactId="EBI-12015604">
        <id>Q8N2M4</id>
    </interactant>
    <interactant intactId="EBI-1045797">
        <id>Q8N5K1</id>
        <label>CISD2</label>
    </interactant>
    <organismsDiffer>false</organismsDiffer>
    <experiments>3</experiments>
</comment>
<comment type="interaction">
    <interactant intactId="EBI-12015604">
        <id>Q8N2M4</id>
    </interactant>
    <interactant intactId="EBI-2835940">
        <id>P34972</id>
        <label>CNR2</label>
    </interactant>
    <organismsDiffer>false</organismsDiffer>
    <experiments>3</experiments>
</comment>
<comment type="interaction">
    <interactant intactId="EBI-12015604">
        <id>Q8N2M4</id>
    </interactant>
    <interactant intactId="EBI-724524">
        <id>O75208</id>
        <label>COQ9</label>
    </interactant>
    <organismsDiffer>false</organismsDiffer>
    <experiments>3</experiments>
</comment>
<comment type="interaction">
    <interactant intactId="EBI-12015604">
        <id>Q8N2M4</id>
    </interactant>
    <interactant intactId="EBI-18013275">
        <id>Q7Z7G2</id>
        <label>CPLX4</label>
    </interactant>
    <organismsDiffer>false</organismsDiffer>
    <experiments>3</experiments>
</comment>
<comment type="interaction">
    <interactant intactId="EBI-12015604">
        <id>Q8N2M4</id>
    </interactant>
    <interactant intactId="EBI-6942903">
        <id>Q96BA8</id>
        <label>CREB3L1</label>
    </interactant>
    <organismsDiffer>false</organismsDiffer>
    <experiments>3</experiments>
</comment>
<comment type="interaction">
    <interactant intactId="EBI-12015604">
        <id>Q8N2M4</id>
    </interactant>
    <interactant intactId="EBI-3915253">
        <id>Q15125</id>
        <label>EBP</label>
    </interactant>
    <organismsDiffer>false</organismsDiffer>
    <experiments>3</experiments>
</comment>
<comment type="interaction">
    <interactant intactId="EBI-12015604">
        <id>Q8N2M4</id>
    </interactant>
    <interactant intactId="EBI-781551">
        <id>Q9Y282</id>
        <label>ERGIC3</label>
    </interactant>
    <organismsDiffer>false</organismsDiffer>
    <experiments>3</experiments>
</comment>
<comment type="interaction">
    <interactant intactId="EBI-12015604">
        <id>Q8N2M4</id>
    </interactant>
    <interactant intactId="EBI-18304435">
        <id>Q5JX71</id>
        <label>FAM209A</label>
    </interactant>
    <organismsDiffer>false</organismsDiffer>
    <experiments>3</experiments>
</comment>
<comment type="interaction">
    <interactant intactId="EBI-12015604">
        <id>Q8N2M4</id>
    </interactant>
    <interactant intactId="EBI-2833872">
        <id>O15552</id>
        <label>FFAR2</label>
    </interactant>
    <organismsDiffer>false</organismsDiffer>
    <experiments>3</experiments>
</comment>
<comment type="interaction">
    <interactant intactId="EBI-12015604">
        <id>Q8N2M4</id>
    </interactant>
    <interactant intactId="EBI-3918971">
        <id>Q9Y680</id>
        <label>FKBP7</label>
    </interactant>
    <organismsDiffer>false</organismsDiffer>
    <experiments>3</experiments>
</comment>
<comment type="interaction">
    <interactant intactId="EBI-12015604">
        <id>Q8N2M4</id>
    </interactant>
    <interactant intactId="EBI-12142257">
        <id>Q8TBE3</id>
        <label>FNDC9</label>
    </interactant>
    <organismsDiffer>false</organismsDiffer>
    <experiments>3</experiments>
</comment>
<comment type="interaction">
    <interactant intactId="EBI-12015604">
        <id>Q8N2M4</id>
    </interactant>
    <interactant intactId="EBI-12175685">
        <id>Q14802-3</id>
        <label>FXYD3</label>
    </interactant>
    <organismsDiffer>false</organismsDiffer>
    <experiments>3</experiments>
</comment>
<comment type="interaction">
    <interactant intactId="EBI-12015604">
        <id>Q8N2M4</id>
    </interactant>
    <interactant intactId="EBI-12831526">
        <id>Q9NTQ9</id>
        <label>GJB4</label>
    </interactant>
    <organismsDiffer>false</organismsDiffer>
    <experiments>3</experiments>
</comment>
<comment type="interaction">
    <interactant intactId="EBI-12015604">
        <id>Q8N2M4</id>
    </interactant>
    <interactant intactId="EBI-3909454">
        <id>O95377</id>
        <label>GJB5</label>
    </interactant>
    <organismsDiffer>false</organismsDiffer>
    <experiments>3</experiments>
</comment>
<comment type="interaction">
    <interactant intactId="EBI-12015604">
        <id>Q8N2M4</id>
    </interactant>
    <interactant intactId="EBI-11979659">
        <id>P36383</id>
        <label>GJC1</label>
    </interactant>
    <organismsDiffer>false</organismsDiffer>
    <experiments>3</experiments>
</comment>
<comment type="interaction">
    <interactant intactId="EBI-12015604">
        <id>Q8N2M4</id>
    </interactant>
    <interactant intactId="EBI-3917143">
        <id>Q5T7V8</id>
        <label>GORAB</label>
    </interactant>
    <organismsDiffer>false</organismsDiffer>
    <experiments>3</experiments>
</comment>
<comment type="interaction">
    <interactant intactId="EBI-12015604">
        <id>Q8N2M4</id>
    </interactant>
    <interactant intactId="EBI-2927498">
        <id>O60883</id>
        <label>GPR37L1</label>
    </interactant>
    <organismsDiffer>false</organismsDiffer>
    <experiments>3</experiments>
</comment>
<comment type="interaction">
    <interactant intactId="EBI-12015604">
        <id>Q8N2M4</id>
    </interactant>
    <interactant intactId="EBI-11472922">
        <id>Q8TDQ0</id>
        <label>HAVCR2</label>
    </interactant>
    <organismsDiffer>false</organismsDiffer>
    <experiments>3</experiments>
</comment>
<comment type="interaction">
    <interactant intactId="EBI-12015604">
        <id>Q8N2M4</id>
    </interactant>
    <interactant intactId="EBI-749265">
        <id>Q8N6L0</id>
        <label>KASH5</label>
    </interactant>
    <organismsDiffer>false</organismsDiffer>
    <experiments>3</experiments>
</comment>
<comment type="interaction">
    <interactant intactId="EBI-12015604">
        <id>Q8N2M4</id>
    </interactant>
    <interactant intactId="EBI-8286599">
        <id>Q09470</id>
        <label>KCNA1</label>
    </interactant>
    <organismsDiffer>false</organismsDiffer>
    <experiments>3</experiments>
</comment>
<comment type="interaction">
    <interactant intactId="EBI-12015604">
        <id>Q8N2M4</id>
    </interactant>
    <interactant intactId="EBI-2820517">
        <id>Q8TAF8</id>
        <label>LHFPL5</label>
    </interactant>
    <organismsDiffer>false</organismsDiffer>
    <experiments>3</experiments>
</comment>
<comment type="interaction">
    <interactant intactId="EBI-12015604">
        <id>Q8N2M4</id>
    </interactant>
    <interactant intactId="EBI-13384102">
        <id>Q01362</id>
        <label>MS4A2</label>
    </interactant>
    <organismsDiffer>false</organismsDiffer>
    <experiments>5</experiments>
</comment>
<comment type="interaction">
    <interactant intactId="EBI-12015604">
        <id>Q8N2M4</id>
    </interactant>
    <interactant intactId="EBI-17263240">
        <id>P15941-11</id>
        <label>MUC1</label>
    </interactant>
    <organismsDiffer>false</organismsDiffer>
    <experiments>3</experiments>
</comment>
<comment type="interaction">
    <interactant intactId="EBI-12015604">
        <id>Q8N2M4</id>
    </interactant>
    <interactant intactId="EBI-10247000">
        <id>Q6IBW4-4</id>
        <label>NCAPH2</label>
    </interactant>
    <organismsDiffer>false</organismsDiffer>
    <experiments>3</experiments>
</comment>
<comment type="interaction">
    <interactant intactId="EBI-12015604">
        <id>Q8N2M4</id>
    </interactant>
    <interactant intactId="EBI-716063">
        <id>Q13113</id>
        <label>PDZK1IP1</label>
    </interactant>
    <organismsDiffer>false</organismsDiffer>
    <experiments>3</experiments>
</comment>
<comment type="interaction">
    <interactant intactId="EBI-12015604">
        <id>Q8N2M4</id>
    </interactant>
    <interactant intactId="EBI-1050125">
        <id>O15173</id>
        <label>PGRMC2</label>
    </interactant>
    <organismsDiffer>false</organismsDiffer>
    <experiments>3</experiments>
</comment>
<comment type="interaction">
    <interactant intactId="EBI-12015604">
        <id>Q8N2M4</id>
    </interactant>
    <interactant intactId="EBI-12810028">
        <id>Q6UXB8</id>
        <label>PI16</label>
    </interactant>
    <organismsDiffer>false</organismsDiffer>
    <experiments>3</experiments>
</comment>
<comment type="interaction">
    <interactant intactId="EBI-12015604">
        <id>Q8N2M4</id>
    </interactant>
    <interactant intactId="EBI-7545592">
        <id>Q9H6H4</id>
        <label>REEP4</label>
    </interactant>
    <organismsDiffer>false</organismsDiffer>
    <experiments>3</experiments>
</comment>
<comment type="interaction">
    <interactant intactId="EBI-12015604">
        <id>Q8N2M4</id>
    </interactant>
    <interactant intactId="EBI-12375429">
        <id>Q7Z5B4-5</id>
        <label>RIC3</label>
    </interactant>
    <organismsDiffer>false</organismsDiffer>
    <experiments>3</experiments>
</comment>
<comment type="interaction">
    <interactant intactId="EBI-12015604">
        <id>Q8N2M4</id>
    </interactant>
    <interactant intactId="EBI-2340249">
        <id>Q96GF1</id>
        <label>RNF185</label>
    </interactant>
    <organismsDiffer>false</organismsDiffer>
    <experiments>3</experiments>
</comment>
<comment type="interaction">
    <interactant intactId="EBI-12015604">
        <id>Q8N2M4</id>
    </interactant>
    <interactant intactId="EBI-17247926">
        <id>Q9NY72</id>
        <label>SCN3B</label>
    </interactant>
    <organismsDiffer>false</organismsDiffer>
    <experiments>3</experiments>
</comment>
<comment type="interaction">
    <interactant intactId="EBI-12015604">
        <id>Q8N2M4</id>
    </interactant>
    <interactant intactId="EBI-18159983">
        <id>Q3KNW5</id>
        <label>SLC10A6</label>
    </interactant>
    <organismsDiffer>false</organismsDiffer>
    <experiments>3</experiments>
</comment>
<comment type="interaction">
    <interactant intactId="EBI-12015604">
        <id>Q8N2M4</id>
    </interactant>
    <interactant intactId="EBI-17595455">
        <id>P54219-3</id>
        <label>SLC18A1</label>
    </interactant>
    <organismsDiffer>false</organismsDiffer>
    <experiments>3</experiments>
</comment>
<comment type="interaction">
    <interactant intactId="EBI-12015604">
        <id>Q8N2M4</id>
    </interactant>
    <interactant intactId="EBI-8644112">
        <id>Q9BRI3</id>
        <label>SLC30A2</label>
    </interactant>
    <organismsDiffer>false</organismsDiffer>
    <experiments>3</experiments>
</comment>
<comment type="interaction">
    <interactant intactId="EBI-12015604">
        <id>Q8N2M4</id>
    </interactant>
    <interactant intactId="EBI-17295964">
        <id>Q9NQQ7-3</id>
        <label>SLC35C2</label>
    </interactant>
    <organismsDiffer>false</organismsDiffer>
    <experiments>3</experiments>
</comment>
<comment type="interaction">
    <interactant intactId="EBI-12015604">
        <id>Q8N2M4</id>
    </interactant>
    <interactant intactId="EBI-12898013">
        <id>Q9NP94</id>
        <label>SLC39A2</label>
    </interactant>
    <organismsDiffer>false</organismsDiffer>
    <experiments>3</experiments>
</comment>
<comment type="interaction">
    <interactant intactId="EBI-12015604">
        <id>Q8N2M4</id>
    </interactant>
    <interactant intactId="EBI-17280858">
        <id>Q8WWF3</id>
        <label>SSMEM1</label>
    </interactant>
    <organismsDiffer>false</organismsDiffer>
    <experiments>3</experiments>
</comment>
<comment type="interaction">
    <interactant intactId="EBI-12015604">
        <id>Q8N2M4</id>
    </interactant>
    <interactant intactId="EBI-726691">
        <id>Q8WY91</id>
        <label>THAP4</label>
    </interactant>
    <organismsDiffer>false</organismsDiffer>
    <experiments>3</experiments>
</comment>
<comment type="interaction">
    <interactant intactId="EBI-12015604">
        <id>Q8N2M4</id>
    </interactant>
    <interactant intactId="EBI-6268651">
        <id>Q9NPL8</id>
        <label>TIMMDC1</label>
    </interactant>
    <organismsDiffer>false</organismsDiffer>
    <experiments>3</experiments>
</comment>
<comment type="interaction">
    <interactant intactId="EBI-12015604">
        <id>Q8N2M4</id>
    </interactant>
    <interactant intactId="EBI-12345267">
        <id>O15393-2</id>
        <label>TMPRSS2</label>
    </interactant>
    <organismsDiffer>false</organismsDiffer>
    <experiments>3</experiments>
</comment>
<comment type="interaction">
    <interactant intactId="EBI-12015604">
        <id>Q8N2M4</id>
    </interactant>
    <interactant intactId="EBI-2214794">
        <id>O43914</id>
        <label>TYROBP</label>
    </interactant>
    <organismsDiffer>false</organismsDiffer>
    <experiments>3</experiments>
</comment>
<comment type="subcellular location">
    <subcellularLocation>
        <location evidence="1">Endoplasmic reticulum membrane</location>
        <topology evidence="2">Multi-pass membrane protein</topology>
    </subcellularLocation>
</comment>
<comment type="tissue specificity">
    <text evidence="3">Expressed in the macrophages.</text>
</comment>
<comment type="induction">
    <text evidence="3">Sterol-inducible in the macrophages and the induction is mediated by the liver X receptor (LXR).</text>
</comment>
<comment type="similarity">
    <text evidence="4">Belongs to the TMEM86 family.</text>
</comment>
<proteinExistence type="evidence at protein level"/>
<name>TM86A_HUMAN</name>
<protein>
    <recommendedName>
        <fullName>Lysoplasmalogenase TMEM86A</fullName>
        <ecNumber evidence="3">3.3.2.2</ecNumber>
    </recommendedName>
    <alternativeName>
        <fullName>Transmembrane protein 86A</fullName>
    </alternativeName>
</protein>
<keyword id="KW-0256">Endoplasmic reticulum</keyword>
<keyword id="KW-0378">Hydrolase</keyword>
<keyword id="KW-0443">Lipid metabolism</keyword>
<keyword id="KW-0472">Membrane</keyword>
<keyword id="KW-1267">Proteomics identification</keyword>
<keyword id="KW-1185">Reference proteome</keyword>
<keyword id="KW-0812">Transmembrane</keyword>
<keyword id="KW-1133">Transmembrane helix</keyword>
<organism>
    <name type="scientific">Homo sapiens</name>
    <name type="common">Human</name>
    <dbReference type="NCBI Taxonomy" id="9606"/>
    <lineage>
        <taxon>Eukaryota</taxon>
        <taxon>Metazoa</taxon>
        <taxon>Chordata</taxon>
        <taxon>Craniata</taxon>
        <taxon>Vertebrata</taxon>
        <taxon>Euteleostomi</taxon>
        <taxon>Mammalia</taxon>
        <taxon>Eutheria</taxon>
        <taxon>Euarchontoglires</taxon>
        <taxon>Primates</taxon>
        <taxon>Haplorrhini</taxon>
        <taxon>Catarrhini</taxon>
        <taxon>Hominidae</taxon>
        <taxon>Homo</taxon>
    </lineage>
</organism>
<reference key="1">
    <citation type="journal article" date="2004" name="Nat. Genet.">
        <title>Complete sequencing and characterization of 21,243 full-length human cDNAs.</title>
        <authorList>
            <person name="Ota T."/>
            <person name="Suzuki Y."/>
            <person name="Nishikawa T."/>
            <person name="Otsuki T."/>
            <person name="Sugiyama T."/>
            <person name="Irie R."/>
            <person name="Wakamatsu A."/>
            <person name="Hayashi K."/>
            <person name="Sato H."/>
            <person name="Nagai K."/>
            <person name="Kimura K."/>
            <person name="Makita H."/>
            <person name="Sekine M."/>
            <person name="Obayashi M."/>
            <person name="Nishi T."/>
            <person name="Shibahara T."/>
            <person name="Tanaka T."/>
            <person name="Ishii S."/>
            <person name="Yamamoto J."/>
            <person name="Saito K."/>
            <person name="Kawai Y."/>
            <person name="Isono Y."/>
            <person name="Nakamura Y."/>
            <person name="Nagahari K."/>
            <person name="Murakami K."/>
            <person name="Yasuda T."/>
            <person name="Iwayanagi T."/>
            <person name="Wagatsuma M."/>
            <person name="Shiratori A."/>
            <person name="Sudo H."/>
            <person name="Hosoiri T."/>
            <person name="Kaku Y."/>
            <person name="Kodaira H."/>
            <person name="Kondo H."/>
            <person name="Sugawara M."/>
            <person name="Takahashi M."/>
            <person name="Kanda K."/>
            <person name="Yokoi T."/>
            <person name="Furuya T."/>
            <person name="Kikkawa E."/>
            <person name="Omura Y."/>
            <person name="Abe K."/>
            <person name="Kamihara K."/>
            <person name="Katsuta N."/>
            <person name="Sato K."/>
            <person name="Tanikawa M."/>
            <person name="Yamazaki M."/>
            <person name="Ninomiya K."/>
            <person name="Ishibashi T."/>
            <person name="Yamashita H."/>
            <person name="Murakawa K."/>
            <person name="Fujimori K."/>
            <person name="Tanai H."/>
            <person name="Kimata M."/>
            <person name="Watanabe M."/>
            <person name="Hiraoka S."/>
            <person name="Chiba Y."/>
            <person name="Ishida S."/>
            <person name="Ono Y."/>
            <person name="Takiguchi S."/>
            <person name="Watanabe S."/>
            <person name="Yosida M."/>
            <person name="Hotuta T."/>
            <person name="Kusano J."/>
            <person name="Kanehori K."/>
            <person name="Takahashi-Fujii A."/>
            <person name="Hara H."/>
            <person name="Tanase T.-O."/>
            <person name="Nomura Y."/>
            <person name="Togiya S."/>
            <person name="Komai F."/>
            <person name="Hara R."/>
            <person name="Takeuchi K."/>
            <person name="Arita M."/>
            <person name="Imose N."/>
            <person name="Musashino K."/>
            <person name="Yuuki H."/>
            <person name="Oshima A."/>
            <person name="Sasaki N."/>
            <person name="Aotsuka S."/>
            <person name="Yoshikawa Y."/>
            <person name="Matsunawa H."/>
            <person name="Ichihara T."/>
            <person name="Shiohata N."/>
            <person name="Sano S."/>
            <person name="Moriya S."/>
            <person name="Momiyama H."/>
            <person name="Satoh N."/>
            <person name="Takami S."/>
            <person name="Terashima Y."/>
            <person name="Suzuki O."/>
            <person name="Nakagawa S."/>
            <person name="Senoh A."/>
            <person name="Mizoguchi H."/>
            <person name="Goto Y."/>
            <person name="Shimizu F."/>
            <person name="Wakebe H."/>
            <person name="Hishigaki H."/>
            <person name="Watanabe T."/>
            <person name="Sugiyama A."/>
            <person name="Takemoto M."/>
            <person name="Kawakami B."/>
            <person name="Yamazaki M."/>
            <person name="Watanabe K."/>
            <person name="Kumagai A."/>
            <person name="Itakura S."/>
            <person name="Fukuzumi Y."/>
            <person name="Fujimori Y."/>
            <person name="Komiyama M."/>
            <person name="Tashiro H."/>
            <person name="Tanigami A."/>
            <person name="Fujiwara T."/>
            <person name="Ono T."/>
            <person name="Yamada K."/>
            <person name="Fujii Y."/>
            <person name="Ozaki K."/>
            <person name="Hirao M."/>
            <person name="Ohmori Y."/>
            <person name="Kawabata A."/>
            <person name="Hikiji T."/>
            <person name="Kobatake N."/>
            <person name="Inagaki H."/>
            <person name="Ikema Y."/>
            <person name="Okamoto S."/>
            <person name="Okitani R."/>
            <person name="Kawakami T."/>
            <person name="Noguchi S."/>
            <person name="Itoh T."/>
            <person name="Shigeta K."/>
            <person name="Senba T."/>
            <person name="Matsumura K."/>
            <person name="Nakajima Y."/>
            <person name="Mizuno T."/>
            <person name="Morinaga M."/>
            <person name="Sasaki M."/>
            <person name="Togashi T."/>
            <person name="Oyama M."/>
            <person name="Hata H."/>
            <person name="Watanabe M."/>
            <person name="Komatsu T."/>
            <person name="Mizushima-Sugano J."/>
            <person name="Satoh T."/>
            <person name="Shirai Y."/>
            <person name="Takahashi Y."/>
            <person name="Nakagawa K."/>
            <person name="Okumura K."/>
            <person name="Nagase T."/>
            <person name="Nomura N."/>
            <person name="Kikuchi H."/>
            <person name="Masuho Y."/>
            <person name="Yamashita R."/>
            <person name="Nakai K."/>
            <person name="Yada T."/>
            <person name="Nakamura Y."/>
            <person name="Ohara O."/>
            <person name="Isogai T."/>
            <person name="Sugano S."/>
        </authorList>
    </citation>
    <scope>NUCLEOTIDE SEQUENCE [LARGE SCALE MRNA]</scope>
    <source>
        <tissue>Embryo</tissue>
    </source>
</reference>
<reference key="2">
    <citation type="journal article" date="2004" name="Genome Res.">
        <title>The status, quality, and expansion of the NIH full-length cDNA project: the Mammalian Gene Collection (MGC).</title>
        <authorList>
            <consortium name="The MGC Project Team"/>
        </authorList>
    </citation>
    <scope>NUCLEOTIDE SEQUENCE [LARGE SCALE MRNA]</scope>
    <source>
        <tissue>Colon</tissue>
    </source>
</reference>
<reference key="3">
    <citation type="journal article" date="2023" name="J. Lipid Res.">
        <title>Sterol-regulated transmembrane protein TMEM86a couples LXR signaling to regulation of lysoplasmalogens in macrophages.</title>
        <authorList>
            <person name="van Wouw S.A.E."/>
            <person name="van den Berg M."/>
            <person name="El Ouraoui M."/>
            <person name="Meurs A."/>
            <person name="Kingma J."/>
            <person name="Ottenhoff R."/>
            <person name="Loix M."/>
            <person name="Hoeksema M.A."/>
            <person name="Prange K."/>
            <person name="Pasterkamp G."/>
            <person name="Hendriks J.J.A."/>
            <person name="Bogie J.F.J."/>
            <person name="van Klinken J.B."/>
            <person name="Vaz F.M."/>
            <person name="Jongejan A."/>
            <person name="de Winther M.P.J."/>
            <person name="Zelcer N."/>
        </authorList>
    </citation>
    <scope>FUNCTION</scope>
    <scope>CATALYTIC ACTIVITY</scope>
    <scope>INDUCTION</scope>
    <scope>TISSUE SPECIFICITY</scope>
</reference>